<evidence type="ECO:0000250" key="1"/>
<evidence type="ECO:0000255" key="2"/>
<evidence type="ECO:0000255" key="3">
    <source>
        <dbReference type="PROSITE-ProRule" id="PRU00099"/>
    </source>
</evidence>
<evidence type="ECO:0000256" key="4">
    <source>
        <dbReference type="SAM" id="MobiDB-lite"/>
    </source>
</evidence>
<evidence type="ECO:0000305" key="5"/>
<proteinExistence type="inferred from homology"/>
<reference key="1">
    <citation type="journal article" date="1991" name="Mol. Microbiol.">
        <title>A pyruvate-stimulated adenylate cyclase has a sequence related to the fes/fps oncogenes and to eukaryotic cyclases.</title>
        <authorList>
            <person name="Peters E.P."/>
            <person name="Wilderspin A.F."/>
            <person name="Wood S.P."/>
            <person name="Zvelebil M.J.J.M."/>
            <person name="Sezer O."/>
            <person name="Danchin A."/>
        </authorList>
    </citation>
    <scope>NUCLEOTIDE SEQUENCE [GENOMIC DNA]</scope>
    <source>
        <strain>ATCC 74929</strain>
    </source>
</reference>
<protein>
    <recommendedName>
        <fullName>Adenylate cyclase</fullName>
        <ecNumber>4.6.1.1</ecNumber>
    </recommendedName>
    <alternativeName>
        <fullName>ATP pyrophosphate-lyase</fullName>
    </alternativeName>
    <alternativeName>
        <fullName>Adenylyl cyclase</fullName>
    </alternativeName>
</protein>
<comment type="function">
    <text>Plays essential roles in regulation of cellular metabolism by catalyzing the synthesis of a second messenger, cAMP.</text>
</comment>
<comment type="catalytic activity">
    <reaction>
        <text>ATP = 3',5'-cyclic AMP + diphosphate</text>
        <dbReference type="Rhea" id="RHEA:15389"/>
        <dbReference type="ChEBI" id="CHEBI:30616"/>
        <dbReference type="ChEBI" id="CHEBI:33019"/>
        <dbReference type="ChEBI" id="CHEBI:58165"/>
        <dbReference type="EC" id="4.6.1.1"/>
    </reaction>
</comment>
<comment type="cofactor">
    <cofactor evidence="1">
        <name>Mg(2+)</name>
        <dbReference type="ChEBI" id="CHEBI:18420"/>
    </cofactor>
    <text evidence="1">Binds 1 Mg(2+) ion per subunit.</text>
</comment>
<comment type="activity regulation">
    <text>Pyruvate-stimulated.</text>
</comment>
<comment type="subunit">
    <text>Homodimer.</text>
</comment>
<comment type="subcellular location">
    <subcellularLocation>
        <location>Cytoplasm</location>
    </subcellularLocation>
</comment>
<comment type="similarity">
    <text evidence="5">Belongs to the adenylyl cyclase class-3 family.</text>
</comment>
<sequence>MSTEHTNTPRADSPQSAAEAVRGARQHAPAATPAESDPILELAEAMEGPLRIPAHTPEAVRDTVASLEKRLIGGQREFRRREVASEAGVSLHSARKLWRAIGFPELSDDEVFFTEADKKALGTMVGMVREGALTEETAISLMRSVGQMTDRMVVWQIEALVEDMIANQNLSDRQARRQLFSLLPEIIPAIEDLLLYSWRRQLNSAVHRMALRVETGVAAYNQDRGEDDGGTPLPLARAVGFADLVSYTSLSRRMNERTLAQLVQRFEAKCAEIISVGGGRLVKTIGDEVLYVAETPQAGAQIALSLSRELAKDELFPQTRGAVVWGRLLSRLGDIYGPTVNMAARLTSLAEPGTVLTDAITANTLRNDARFVLTAQEITAVRGFGDIQPYELSAGEGAGLVID</sequence>
<accession>P27580</accession>
<feature type="chain" id="PRO_0000195743" description="Adenylate cyclase">
    <location>
        <begin position="1"/>
        <end position="403"/>
    </location>
</feature>
<feature type="domain" description="Guanylate cyclase" evidence="3">
    <location>
        <begin position="238"/>
        <end position="347"/>
    </location>
</feature>
<feature type="region of interest" description="Disordered" evidence="4">
    <location>
        <begin position="1"/>
        <end position="37"/>
    </location>
</feature>
<feature type="region of interest" description="Pyruvate binding" evidence="2">
    <location>
        <begin position="31"/>
        <end position="60"/>
    </location>
</feature>
<feature type="compositionally biased region" description="Polar residues" evidence="4">
    <location>
        <begin position="1"/>
        <end position="16"/>
    </location>
</feature>
<feature type="binding site" evidence="1">
    <location>
        <position position="243"/>
    </location>
    <ligand>
        <name>Mg(2+)</name>
        <dbReference type="ChEBI" id="CHEBI:18420"/>
    </ligand>
</feature>
<feature type="binding site" evidence="1">
    <location>
        <position position="287"/>
    </location>
    <ligand>
        <name>Mg(2+)</name>
        <dbReference type="ChEBI" id="CHEBI:18420"/>
    </ligand>
</feature>
<dbReference type="EC" id="4.6.1.1"/>
<dbReference type="EMBL" id="X57541">
    <property type="protein sequence ID" value="CAA40760.1"/>
    <property type="molecule type" value="Genomic_DNA"/>
</dbReference>
<dbReference type="PIR" id="S15273">
    <property type="entry name" value="OYFKQ"/>
</dbReference>
<dbReference type="SMR" id="P27580"/>
<dbReference type="GO" id="GO:0005737">
    <property type="term" value="C:cytoplasm"/>
    <property type="evidence" value="ECO:0007669"/>
    <property type="project" value="UniProtKB-SubCell"/>
</dbReference>
<dbReference type="GO" id="GO:0004016">
    <property type="term" value="F:adenylate cyclase activity"/>
    <property type="evidence" value="ECO:0007669"/>
    <property type="project" value="UniProtKB-EC"/>
</dbReference>
<dbReference type="GO" id="GO:0005524">
    <property type="term" value="F:ATP binding"/>
    <property type="evidence" value="ECO:0007669"/>
    <property type="project" value="UniProtKB-KW"/>
</dbReference>
<dbReference type="GO" id="GO:0046872">
    <property type="term" value="F:metal ion binding"/>
    <property type="evidence" value="ECO:0007669"/>
    <property type="project" value="UniProtKB-KW"/>
</dbReference>
<dbReference type="GO" id="GO:0006171">
    <property type="term" value="P:cAMP biosynthetic process"/>
    <property type="evidence" value="ECO:0007669"/>
    <property type="project" value="UniProtKB-KW"/>
</dbReference>
<dbReference type="GO" id="GO:0035556">
    <property type="term" value="P:intracellular signal transduction"/>
    <property type="evidence" value="ECO:0007669"/>
    <property type="project" value="InterPro"/>
</dbReference>
<dbReference type="CDD" id="cd07302">
    <property type="entry name" value="CHD"/>
    <property type="match status" value="1"/>
</dbReference>
<dbReference type="Gene3D" id="3.30.70.1230">
    <property type="entry name" value="Nucleotide cyclase"/>
    <property type="match status" value="1"/>
</dbReference>
<dbReference type="InterPro" id="IPR001054">
    <property type="entry name" value="A/G_cyclase"/>
</dbReference>
<dbReference type="InterPro" id="IPR032026">
    <property type="entry name" value="Ad_Cy_reg"/>
</dbReference>
<dbReference type="InterPro" id="IPR029787">
    <property type="entry name" value="Nucleotide_cyclase"/>
</dbReference>
<dbReference type="Pfam" id="PF16701">
    <property type="entry name" value="Ad_Cy_reg"/>
    <property type="match status" value="1"/>
</dbReference>
<dbReference type="Pfam" id="PF00211">
    <property type="entry name" value="Guanylate_cyc"/>
    <property type="match status" value="1"/>
</dbReference>
<dbReference type="SUPFAM" id="SSF55073">
    <property type="entry name" value="Nucleotide cyclase"/>
    <property type="match status" value="1"/>
</dbReference>
<dbReference type="PROSITE" id="PS50125">
    <property type="entry name" value="GUANYLATE_CYCLASE_2"/>
    <property type="match status" value="1"/>
</dbReference>
<keyword id="KW-0067">ATP-binding</keyword>
<keyword id="KW-0115">cAMP biosynthesis</keyword>
<keyword id="KW-0963">Cytoplasm</keyword>
<keyword id="KW-0456">Lyase</keyword>
<keyword id="KW-0460">Magnesium</keyword>
<keyword id="KW-0479">Metal-binding</keyword>
<keyword id="KW-0547">Nucleotide-binding</keyword>
<gene>
    <name type="primary">cya</name>
</gene>
<name>CYAA_GLUNI</name>
<organism>
    <name type="scientific">Glutamicibacter nicotianae</name>
    <name type="common">Arthrobacter nicotianae</name>
    <dbReference type="NCBI Taxonomy" id="37929"/>
    <lineage>
        <taxon>Bacteria</taxon>
        <taxon>Bacillati</taxon>
        <taxon>Actinomycetota</taxon>
        <taxon>Actinomycetes</taxon>
        <taxon>Micrococcales</taxon>
        <taxon>Micrococcaceae</taxon>
        <taxon>Glutamicibacter</taxon>
    </lineage>
</organism>